<keyword id="KW-1003">Cell membrane</keyword>
<keyword id="KW-0472">Membrane</keyword>
<keyword id="KW-0653">Protein transport</keyword>
<keyword id="KW-0811">Translocation</keyword>
<keyword id="KW-0812">Transmembrane</keyword>
<keyword id="KW-1133">Transmembrane helix</keyword>
<keyword id="KW-0813">Transport</keyword>
<feature type="chain" id="PRO_0000157240" description="Probable protein-export membrane protein SecG">
    <location>
        <begin position="1"/>
        <end position="77"/>
    </location>
</feature>
<feature type="transmembrane region" description="Helical" evidence="2">
    <location>
        <begin position="2"/>
        <end position="22"/>
    </location>
</feature>
<feature type="transmembrane region" description="Helical" evidence="2">
    <location>
        <begin position="57"/>
        <end position="77"/>
    </location>
</feature>
<accession>Q5HHN9</accession>
<evidence type="ECO:0000250" key="1"/>
<evidence type="ECO:0000255" key="2"/>
<evidence type="ECO:0000305" key="3"/>
<protein>
    <recommendedName>
        <fullName>Probable protein-export membrane protein SecG</fullName>
    </recommendedName>
</protein>
<reference key="1">
    <citation type="journal article" date="2005" name="J. Bacteriol.">
        <title>Insights on evolution of virulence and resistance from the complete genome analysis of an early methicillin-resistant Staphylococcus aureus strain and a biofilm-producing methicillin-resistant Staphylococcus epidermidis strain.</title>
        <authorList>
            <person name="Gill S.R."/>
            <person name="Fouts D.E."/>
            <person name="Archer G.L."/>
            <person name="Mongodin E.F."/>
            <person name="DeBoy R.T."/>
            <person name="Ravel J."/>
            <person name="Paulsen I.T."/>
            <person name="Kolonay J.F."/>
            <person name="Brinkac L.M."/>
            <person name="Beanan M.J."/>
            <person name="Dodson R.J."/>
            <person name="Daugherty S.C."/>
            <person name="Madupu R."/>
            <person name="Angiuoli S.V."/>
            <person name="Durkin A.S."/>
            <person name="Haft D.H."/>
            <person name="Vamathevan J.J."/>
            <person name="Khouri H."/>
            <person name="Utterback T.R."/>
            <person name="Lee C."/>
            <person name="Dimitrov G."/>
            <person name="Jiang L."/>
            <person name="Qin H."/>
            <person name="Weidman J."/>
            <person name="Tran K."/>
            <person name="Kang K.H."/>
            <person name="Hance I.R."/>
            <person name="Nelson K.E."/>
            <person name="Fraser C.M."/>
        </authorList>
    </citation>
    <scope>NUCLEOTIDE SEQUENCE [LARGE SCALE GENOMIC DNA]</scope>
    <source>
        <strain>COL</strain>
    </source>
</reference>
<name>SECG_STAAC</name>
<gene>
    <name type="primary">secG</name>
    <name type="ordered locus">SACOL0844</name>
</gene>
<sequence>MHTFLIVLLIIDCIALITVVLLQEGKSSGLSGAISGGAEQLFGKQKQRGVDLFLNRLTIILSILFFVLMICISYLGM</sequence>
<proteinExistence type="inferred from homology"/>
<dbReference type="EMBL" id="CP000046">
    <property type="protein sequence ID" value="AAW36400.1"/>
    <property type="molecule type" value="Genomic_DNA"/>
</dbReference>
<dbReference type="RefSeq" id="WP_000556760.1">
    <property type="nucleotide sequence ID" value="NZ_JBGOFO010000005.1"/>
</dbReference>
<dbReference type="GeneID" id="98345127"/>
<dbReference type="KEGG" id="sac:SACOL0844"/>
<dbReference type="HOGENOM" id="CLU_094156_6_1_9"/>
<dbReference type="Proteomes" id="UP000000530">
    <property type="component" value="Chromosome"/>
</dbReference>
<dbReference type="GO" id="GO:0005886">
    <property type="term" value="C:plasma membrane"/>
    <property type="evidence" value="ECO:0007669"/>
    <property type="project" value="UniProtKB-SubCell"/>
</dbReference>
<dbReference type="GO" id="GO:0015450">
    <property type="term" value="F:protein-transporting ATPase activity"/>
    <property type="evidence" value="ECO:0007669"/>
    <property type="project" value="InterPro"/>
</dbReference>
<dbReference type="GO" id="GO:0065002">
    <property type="term" value="P:intracellular protein transmembrane transport"/>
    <property type="evidence" value="ECO:0007669"/>
    <property type="project" value="TreeGrafter"/>
</dbReference>
<dbReference type="GO" id="GO:0009306">
    <property type="term" value="P:protein secretion"/>
    <property type="evidence" value="ECO:0007669"/>
    <property type="project" value="InterPro"/>
</dbReference>
<dbReference type="GO" id="GO:0043952">
    <property type="term" value="P:protein transport by the Sec complex"/>
    <property type="evidence" value="ECO:0007669"/>
    <property type="project" value="TreeGrafter"/>
</dbReference>
<dbReference type="InterPro" id="IPR004692">
    <property type="entry name" value="SecG"/>
</dbReference>
<dbReference type="NCBIfam" id="TIGR00810">
    <property type="entry name" value="secG"/>
    <property type="match status" value="1"/>
</dbReference>
<dbReference type="PANTHER" id="PTHR34182">
    <property type="entry name" value="PROTEIN-EXPORT MEMBRANE PROTEIN SECG"/>
    <property type="match status" value="1"/>
</dbReference>
<dbReference type="PANTHER" id="PTHR34182:SF1">
    <property type="entry name" value="PROTEIN-EXPORT MEMBRANE PROTEIN SECG"/>
    <property type="match status" value="1"/>
</dbReference>
<dbReference type="Pfam" id="PF03840">
    <property type="entry name" value="SecG"/>
    <property type="match status" value="1"/>
</dbReference>
<dbReference type="PRINTS" id="PR01651">
    <property type="entry name" value="SECGEXPORT"/>
</dbReference>
<comment type="function">
    <text evidence="1">Involved in protein export. Participates in an early event of protein translocation (By similarity).</text>
</comment>
<comment type="subcellular location">
    <subcellularLocation>
        <location evidence="1">Cell membrane</location>
        <topology evidence="1">Multi-pass membrane protein</topology>
    </subcellularLocation>
</comment>
<comment type="similarity">
    <text evidence="3">Belongs to the SecG family.</text>
</comment>
<organism>
    <name type="scientific">Staphylococcus aureus (strain COL)</name>
    <dbReference type="NCBI Taxonomy" id="93062"/>
    <lineage>
        <taxon>Bacteria</taxon>
        <taxon>Bacillati</taxon>
        <taxon>Bacillota</taxon>
        <taxon>Bacilli</taxon>
        <taxon>Bacillales</taxon>
        <taxon>Staphylococcaceae</taxon>
        <taxon>Staphylococcus</taxon>
    </lineage>
</organism>